<keyword id="KW-0406">Ion transport</keyword>
<keyword id="KW-0472">Membrane</keyword>
<keyword id="KW-0630">Potassium</keyword>
<keyword id="KW-0633">Potassium transport</keyword>
<keyword id="KW-1185">Reference proteome</keyword>
<keyword id="KW-0812">Transmembrane</keyword>
<keyword id="KW-1133">Transmembrane helix</keyword>
<keyword id="KW-0813">Transport</keyword>
<name>HAK21_ORYSJ</name>
<dbReference type="EMBL" id="AC146468">
    <property type="protein sequence ID" value="AAR10860.1"/>
    <property type="molecule type" value="Genomic_DNA"/>
</dbReference>
<dbReference type="EMBL" id="DP000009">
    <property type="protein sequence ID" value="ABF97248.1"/>
    <property type="molecule type" value="Genomic_DNA"/>
</dbReference>
<dbReference type="EMBL" id="AP008209">
    <property type="protein sequence ID" value="BAH92235.1"/>
    <property type="molecule type" value="Genomic_DNA"/>
</dbReference>
<dbReference type="EMBL" id="AP014959">
    <property type="protein sequence ID" value="BAS85023.1"/>
    <property type="molecule type" value="Genomic_DNA"/>
</dbReference>
<dbReference type="FunCoup" id="Q75G84">
    <property type="interactions" value="26"/>
</dbReference>
<dbReference type="STRING" id="39947.Q75G84"/>
<dbReference type="PaxDb" id="39947-Q75G84"/>
<dbReference type="EnsemblPlants" id="Os03t0576200-01">
    <property type="protein sequence ID" value="Os03t0576200-01"/>
    <property type="gene ID" value="Os03g0576200"/>
</dbReference>
<dbReference type="Gramene" id="Os03t0576200-01">
    <property type="protein sequence ID" value="Os03t0576200-01"/>
    <property type="gene ID" value="Os03g0576200"/>
</dbReference>
<dbReference type="KEGG" id="dosa:Os03g0576200"/>
<dbReference type="eggNOG" id="ENOG502QPSA">
    <property type="taxonomic scope" value="Eukaryota"/>
</dbReference>
<dbReference type="HOGENOM" id="CLU_008142_2_0_1"/>
<dbReference type="InParanoid" id="Q75G84"/>
<dbReference type="OMA" id="DHDSWGT"/>
<dbReference type="Proteomes" id="UP000000763">
    <property type="component" value="Chromosome 3"/>
</dbReference>
<dbReference type="Proteomes" id="UP000059680">
    <property type="component" value="Chromosome 3"/>
</dbReference>
<dbReference type="GO" id="GO:0016020">
    <property type="term" value="C:membrane"/>
    <property type="evidence" value="ECO:0000318"/>
    <property type="project" value="GO_Central"/>
</dbReference>
<dbReference type="GO" id="GO:0015079">
    <property type="term" value="F:potassium ion transmembrane transporter activity"/>
    <property type="evidence" value="ECO:0000318"/>
    <property type="project" value="GO_Central"/>
</dbReference>
<dbReference type="GO" id="GO:0006813">
    <property type="term" value="P:potassium ion transport"/>
    <property type="evidence" value="ECO:0000318"/>
    <property type="project" value="GO_Central"/>
</dbReference>
<dbReference type="InterPro" id="IPR003855">
    <property type="entry name" value="K+_transporter"/>
</dbReference>
<dbReference type="InterPro" id="IPR053952">
    <property type="entry name" value="K_trans_C"/>
</dbReference>
<dbReference type="InterPro" id="IPR053951">
    <property type="entry name" value="K_trans_N"/>
</dbReference>
<dbReference type="NCBIfam" id="TIGR00794">
    <property type="entry name" value="kup"/>
    <property type="match status" value="1"/>
</dbReference>
<dbReference type="PANTHER" id="PTHR30540">
    <property type="entry name" value="OSMOTIC STRESS POTASSIUM TRANSPORTER"/>
    <property type="match status" value="1"/>
</dbReference>
<dbReference type="PANTHER" id="PTHR30540:SF28">
    <property type="entry name" value="POTASSIUM TRANSPORTER 21"/>
    <property type="match status" value="1"/>
</dbReference>
<dbReference type="Pfam" id="PF02705">
    <property type="entry name" value="K_trans"/>
    <property type="match status" value="1"/>
</dbReference>
<dbReference type="Pfam" id="PF22776">
    <property type="entry name" value="K_trans_C"/>
    <property type="match status" value="1"/>
</dbReference>
<comment type="function">
    <text evidence="1">High-affinity potassium transporter.</text>
</comment>
<comment type="subcellular location">
    <subcellularLocation>
        <location evidence="3">Membrane</location>
        <topology evidence="3">Multi-pass membrane protein</topology>
    </subcellularLocation>
</comment>
<comment type="similarity">
    <text evidence="3">Belongs to the HAK/KUP transporter (TC 2.A.72.3) family.</text>
</comment>
<sequence>MDPGVEKKKQQMELVDVESGGLPVERQDSLFREAVRAEHAGAAHWDEQDSWGRTMSLAFQCVGILYGDIGTSSLYVYSSTFEHGIGHPDDVVGVLSLIVYSFMLFTVIKIVFVALHANDHGDGGTFALYSLISRHAKVSLIPNHQAEDELISGYSSSGKPSATLRRAHWLKQLLEASKAAKISLFLLTILAIAMVISDAVLTPPISVLSAVGGLREKVPHLTTDQIVWITVAILVVLFAIQRYGTDKVGYSFAPIILLWLLLIGATGLYNLIKHDISVLRAFNPKYIIDYFRRNKKEGWVSLGSILLCFTGSEALFANLGYFSIRSIQLSFSFALLPSVLLTYIGQAAFLSKNPKNVANTFFAATPISLFWPTFIMAIAASIIGSQAMISCAFATVSHLQSLSCFPRVKILHTSKRFPGQLYIPGVNFLLCVAACVVTVSFKTTVIIGKAHEICVILVMIITTLLMTIVMLLVWKINILWVALFFITFTSTEAVYLSSVLYKFTHGPYVPVAMSVVLMVVMIVWHYVHVKRYKYELEHTVSTDKVKEMLESHDLKRVRGVALFYTELVQGIPPIFPHLIEKIPTIHSVLVFISIKHLPVPHVDTSERFLFRQVELKDYKVFRCVARYGYRDSLEEAKDFVVTLLENLQDYIRDVNLYTDEPHTISAHSSCNHSFSREKPSGRYAVHAEDMLTPIESFSEITALSNYGSDRLPHFKASKMNMEELAKIEQEQMFIEKEMEKGVVYILGETEVVVRPHSSLLKKIVVNYVYSFLRKNFVQGQKMLFIPHRQLLKVGISYEI</sequence>
<protein>
    <recommendedName>
        <fullName>Potassium transporter 21</fullName>
    </recommendedName>
    <alternativeName>
        <fullName>OsHAK21</fullName>
    </alternativeName>
</protein>
<feature type="chain" id="PRO_0000379536" description="Potassium transporter 21">
    <location>
        <begin position="1"/>
        <end position="799"/>
    </location>
</feature>
<feature type="topological domain" description="Cytoplasmic" evidence="2">
    <location>
        <begin position="1"/>
        <end position="56"/>
    </location>
</feature>
<feature type="transmembrane region" description="Helical; Name=1" evidence="2">
    <location>
        <begin position="57"/>
        <end position="77"/>
    </location>
</feature>
<feature type="topological domain" description="Extracellular" evidence="2">
    <location>
        <begin position="78"/>
        <end position="93"/>
    </location>
</feature>
<feature type="transmembrane region" description="Helical; Name=2" evidence="2">
    <location>
        <begin position="94"/>
        <end position="114"/>
    </location>
</feature>
<feature type="topological domain" description="Cytoplasmic" evidence="2">
    <location>
        <begin position="115"/>
        <end position="181"/>
    </location>
</feature>
<feature type="transmembrane region" description="Helical; Name=3" evidence="2">
    <location>
        <begin position="182"/>
        <end position="202"/>
    </location>
</feature>
<feature type="topological domain" description="Extracellular" evidence="2">
    <location>
        <begin position="203"/>
        <end position="219"/>
    </location>
</feature>
<feature type="transmembrane region" description="Helical; Name=4" evidence="2">
    <location>
        <begin position="220"/>
        <end position="240"/>
    </location>
</feature>
<feature type="topological domain" description="Cytoplasmic" evidence="2">
    <location>
        <begin position="241"/>
        <end position="251"/>
    </location>
</feature>
<feature type="transmembrane region" description="Helical; Name=5" evidence="2">
    <location>
        <begin position="252"/>
        <end position="272"/>
    </location>
</feature>
<feature type="topological domain" description="Extracellular" evidence="2">
    <location>
        <begin position="273"/>
        <end position="301"/>
    </location>
</feature>
<feature type="transmembrane region" description="Helical; Name=6" evidence="2">
    <location>
        <begin position="302"/>
        <end position="322"/>
    </location>
</feature>
<feature type="topological domain" description="Cytoplasmic" evidence="2">
    <location>
        <begin position="323"/>
        <end position="328"/>
    </location>
</feature>
<feature type="transmembrane region" description="Helical; Name=7" evidence="2">
    <location>
        <begin position="329"/>
        <end position="349"/>
    </location>
</feature>
<feature type="topological domain" description="Extracellular" evidence="2">
    <location>
        <begin position="350"/>
        <end position="362"/>
    </location>
</feature>
<feature type="transmembrane region" description="Helical; Name=8" evidence="2">
    <location>
        <begin position="363"/>
        <end position="383"/>
    </location>
</feature>
<feature type="topological domain" description="Cytoplasmic" evidence="2">
    <location>
        <begin position="384"/>
        <end position="420"/>
    </location>
</feature>
<feature type="transmembrane region" description="Helical; Name=9" evidence="2">
    <location>
        <begin position="421"/>
        <end position="441"/>
    </location>
</feature>
<feature type="topological domain" description="Extracellular" evidence="2">
    <location>
        <begin position="442"/>
        <end position="452"/>
    </location>
</feature>
<feature type="transmembrane region" description="Helical; Name=10" evidence="2">
    <location>
        <begin position="453"/>
        <end position="473"/>
    </location>
</feature>
<feature type="topological domain" description="Cytoplasmic" evidence="2">
    <location>
        <begin position="474"/>
        <end position="475"/>
    </location>
</feature>
<feature type="transmembrane region" description="Helical; Name=11" evidence="2">
    <location>
        <begin position="476"/>
        <end position="496"/>
    </location>
</feature>
<feature type="topological domain" description="Extracellular" evidence="2">
    <location>
        <begin position="497"/>
        <end position="508"/>
    </location>
</feature>
<feature type="transmembrane region" description="Helical; Name=12" evidence="2">
    <location>
        <begin position="509"/>
        <end position="529"/>
    </location>
</feature>
<feature type="topological domain" description="Cytoplasmic" evidence="2">
    <location>
        <begin position="530"/>
        <end position="799"/>
    </location>
</feature>
<proteinExistence type="inferred from homology"/>
<evidence type="ECO:0000250" key="1"/>
<evidence type="ECO:0000255" key="2"/>
<evidence type="ECO:0000305" key="3"/>
<organism>
    <name type="scientific">Oryza sativa subsp. japonica</name>
    <name type="common">Rice</name>
    <dbReference type="NCBI Taxonomy" id="39947"/>
    <lineage>
        <taxon>Eukaryota</taxon>
        <taxon>Viridiplantae</taxon>
        <taxon>Streptophyta</taxon>
        <taxon>Embryophyta</taxon>
        <taxon>Tracheophyta</taxon>
        <taxon>Spermatophyta</taxon>
        <taxon>Magnoliopsida</taxon>
        <taxon>Liliopsida</taxon>
        <taxon>Poales</taxon>
        <taxon>Poaceae</taxon>
        <taxon>BOP clade</taxon>
        <taxon>Oryzoideae</taxon>
        <taxon>Oryzeae</taxon>
        <taxon>Oryzinae</taxon>
        <taxon>Oryza</taxon>
        <taxon>Oryza sativa</taxon>
    </lineage>
</organism>
<gene>
    <name type="primary">HAK21</name>
    <name type="ordered locus">Os03g0576200</name>
    <name type="ordered locus">LOC_Os03g37930</name>
    <name type="ORF">OSJNBa0008D12.10</name>
</gene>
<reference key="1">
    <citation type="journal article" date="2005" name="Genome Res.">
        <title>Sequence, annotation, and analysis of synteny between rice chromosome 3 and diverged grass species.</title>
        <authorList>
            <consortium name="The rice chromosome 3 sequencing consortium"/>
            <person name="Buell C.R."/>
            <person name="Yuan Q."/>
            <person name="Ouyang S."/>
            <person name="Liu J."/>
            <person name="Zhu W."/>
            <person name="Wang A."/>
            <person name="Maiti R."/>
            <person name="Haas B."/>
            <person name="Wortman J."/>
            <person name="Pertea M."/>
            <person name="Jones K.M."/>
            <person name="Kim M."/>
            <person name="Overton L."/>
            <person name="Tsitrin T."/>
            <person name="Fadrosh D."/>
            <person name="Bera J."/>
            <person name="Weaver B."/>
            <person name="Jin S."/>
            <person name="Johri S."/>
            <person name="Reardon M."/>
            <person name="Webb K."/>
            <person name="Hill J."/>
            <person name="Moffat K."/>
            <person name="Tallon L."/>
            <person name="Van Aken S."/>
            <person name="Lewis M."/>
            <person name="Utterback T."/>
            <person name="Feldblyum T."/>
            <person name="Zismann V."/>
            <person name="Iobst S."/>
            <person name="Hsiao J."/>
            <person name="de Vazeille A.R."/>
            <person name="Salzberg S.L."/>
            <person name="White O."/>
            <person name="Fraser C.M."/>
            <person name="Yu Y."/>
            <person name="Kim H."/>
            <person name="Rambo T."/>
            <person name="Currie J."/>
            <person name="Collura K."/>
            <person name="Kernodle-Thompson S."/>
            <person name="Wei F."/>
            <person name="Kudrna K."/>
            <person name="Ammiraju J.S.S."/>
            <person name="Luo M."/>
            <person name="Goicoechea J.L."/>
            <person name="Wing R.A."/>
            <person name="Henry D."/>
            <person name="Oates R."/>
            <person name="Palmer M."/>
            <person name="Pries G."/>
            <person name="Saski C."/>
            <person name="Simmons J."/>
            <person name="Soderlund C."/>
            <person name="Nelson W."/>
            <person name="de la Bastide M."/>
            <person name="Spiegel L."/>
            <person name="Nascimento L."/>
            <person name="Huang E."/>
            <person name="Preston R."/>
            <person name="Zutavern T."/>
            <person name="Palmer L."/>
            <person name="O'Shaughnessy A."/>
            <person name="Dike S."/>
            <person name="McCombie W.R."/>
            <person name="Minx P."/>
            <person name="Cordum H."/>
            <person name="Wilson R."/>
            <person name="Jin W."/>
            <person name="Lee H.R."/>
            <person name="Jiang J."/>
            <person name="Jackson S."/>
        </authorList>
    </citation>
    <scope>NUCLEOTIDE SEQUENCE [LARGE SCALE GENOMIC DNA]</scope>
    <source>
        <strain>cv. Nipponbare</strain>
    </source>
</reference>
<reference key="2">
    <citation type="journal article" date="2005" name="Nature">
        <title>The map-based sequence of the rice genome.</title>
        <authorList>
            <consortium name="International rice genome sequencing project (IRGSP)"/>
        </authorList>
    </citation>
    <scope>NUCLEOTIDE SEQUENCE [LARGE SCALE GENOMIC DNA]</scope>
    <source>
        <strain>cv. Nipponbare</strain>
    </source>
</reference>
<reference key="3">
    <citation type="journal article" date="2008" name="Nucleic Acids Res.">
        <title>The rice annotation project database (RAP-DB): 2008 update.</title>
        <authorList>
            <consortium name="The rice annotation project (RAP)"/>
        </authorList>
    </citation>
    <scope>GENOME REANNOTATION</scope>
    <source>
        <strain>cv. Nipponbare</strain>
    </source>
</reference>
<reference key="4">
    <citation type="journal article" date="2013" name="Rice">
        <title>Improvement of the Oryza sativa Nipponbare reference genome using next generation sequence and optical map data.</title>
        <authorList>
            <person name="Kawahara Y."/>
            <person name="de la Bastide M."/>
            <person name="Hamilton J.P."/>
            <person name="Kanamori H."/>
            <person name="McCombie W.R."/>
            <person name="Ouyang S."/>
            <person name="Schwartz D.C."/>
            <person name="Tanaka T."/>
            <person name="Wu J."/>
            <person name="Zhou S."/>
            <person name="Childs K.L."/>
            <person name="Davidson R.M."/>
            <person name="Lin H."/>
            <person name="Quesada-Ocampo L."/>
            <person name="Vaillancourt B."/>
            <person name="Sakai H."/>
            <person name="Lee S.S."/>
            <person name="Kim J."/>
            <person name="Numa H."/>
            <person name="Itoh T."/>
            <person name="Buell C.R."/>
            <person name="Matsumoto T."/>
        </authorList>
    </citation>
    <scope>GENOME REANNOTATION</scope>
    <source>
        <strain>cv. Nipponbare</strain>
    </source>
</reference>
<reference key="5">
    <citation type="journal article" date="2009" name="J. Genet. Genomics">
        <title>Molecular evolution and functional divergence of HAK potassium transporter gene family in rice (Oryza sativa L.).</title>
        <authorList>
            <person name="Yang Z."/>
            <person name="Gao Q."/>
            <person name="Sun C."/>
            <person name="Li W."/>
            <person name="Gu S."/>
            <person name="Xu C."/>
        </authorList>
    </citation>
    <scope>GENE FAMILY</scope>
</reference>
<accession>Q75G84</accession>
<accession>C7J099</accession>